<organism>
    <name type="scientific">Halorhodospira halophila (strain DSM 244 / SL1)</name>
    <name type="common">Ectothiorhodospira halophila (strain DSM 244 / SL1)</name>
    <dbReference type="NCBI Taxonomy" id="349124"/>
    <lineage>
        <taxon>Bacteria</taxon>
        <taxon>Pseudomonadati</taxon>
        <taxon>Pseudomonadota</taxon>
        <taxon>Gammaproteobacteria</taxon>
        <taxon>Chromatiales</taxon>
        <taxon>Ectothiorhodospiraceae</taxon>
        <taxon>Halorhodospira</taxon>
    </lineage>
</organism>
<sequence length="1381" mass="153692">MAYSFTEKKRIRKDFGKLPNILDVPYLLATQVDSYRQFLQDEVSEDARDTEVGLEGAFRSVFPIQSHSGNAELQYVSYRIGDPPFEVKECQSRGLTYAAPLRMLVRLALYDKEGGGVKDIKEQEVYMGEMPLMTSTGTFVVNGTERVIVNQLHRSPGVFFDHDKGKSHSSGKLLFSARVIPYRGSWLDFEFDPKDTIYVRIDRRRKLPATILLRALGYTPEEILYAFFDTDRFHLGSGNKVVLDLVPERLRGETASFDIVAGGETIVEAGRRVTARHVKQLQKSGVEQLEVPEDYLTGKIIAHDVIDPATGEILAEANTTLTPEITQSLFDAGIREIETLFVNDLDRGPYMSTTLAADATRSQMEALVEIYRMMRPGEPPTKDAAENLFHTLFFTSDRYDLSPVGRMKFNLRVGRDEVRGPGILYDGKYFAGLGNADKEADDLIEQYGESSDILDVLRELIDIRNGNGQVDDIDHLGNRRVRSVGEMAENVFRVGLVRVERAVKERLSLAESEGLMPQELINAKPVAAAIKEFFGSSQLSQFMDQNNPLSEVTHKRRISALGPGGLTRERAGFEVRDVHPTHYGRVCPIETPEGPNIGLINSLAVYARANRYGFLETAYRKVVDGQVTDQVEYLSAIEESRYVIAQANARVDESGYLADDLISCRHQNEFTMATADRVQYMDVSPRQIVSVAASLVPFLEHDDANRALMGANMQRQAVPTLRADKPLVGTGMERTVARDSGVIVTAERGGVVEQVDSGRIVVRVDDEETTPGEPGVDIYSLTKYTRSNQNTCFSQKPLVHVGDRVARGDALADGPSTDMGELALGQNMLVAFMPWNGYNFEDSILISEKLVKEDRYTSVHIEELTCVARDTKLGSEEITSDIPNVSESALSRLDESGIVYIGAEVKAGDILVGKVTPKGETQLTPEEKLLRAIFGEKASDVKDTSLRVPTGMDGTVIDVQVFTRDGVEKDERARAIEREEIARVRKDLDDEARIFEDDAYARLEKLLVGKVAEGGPKGLGSGAEVTEAYLQDLPRERWFEIRMRDEAVNQQLEAVRHQLETQRDRFERRFQEKKEKITAGDDLSPGVLKTVKVHLAVKRRLQPGDKFAGRHGNKGVISMIVPEEDMPYMDDGTPVEVVLSPLGVPSRMNVGQVLETHLGWAARGLGHQIGQMLEQQADAEALRGYLSEIYDASGRKEELETLSEEELQELCHNLKGGVPAATPVFDGANEGEIKRWLKLAGLPESGQTTLYDGRTGDAFDRPITVGYMYMLKLNHLVDDKVHARATGPYSLVTQQPLGGKAQFGGQRFGEMEVWALEAYGAAYTLQEMLTVKSDDVSGRTKMYKNIVDGDHRMEAGMPESFNVLVKEIRSLGINIELERDD</sequence>
<feature type="chain" id="PRO_0000300325" description="DNA-directed RNA polymerase subunit beta">
    <location>
        <begin position="1"/>
        <end position="1381"/>
    </location>
</feature>
<protein>
    <recommendedName>
        <fullName evidence="1">DNA-directed RNA polymerase subunit beta</fullName>
        <shortName evidence="1">RNAP subunit beta</shortName>
        <ecNumber evidence="1">2.7.7.6</ecNumber>
    </recommendedName>
    <alternativeName>
        <fullName evidence="1">RNA polymerase subunit beta</fullName>
    </alternativeName>
    <alternativeName>
        <fullName evidence="1">Transcriptase subunit beta</fullName>
    </alternativeName>
</protein>
<gene>
    <name evidence="1" type="primary">rpoB</name>
    <name type="ordered locus">Hhal_0865</name>
</gene>
<comment type="function">
    <text evidence="1">DNA-dependent RNA polymerase catalyzes the transcription of DNA into RNA using the four ribonucleoside triphosphates as substrates.</text>
</comment>
<comment type="catalytic activity">
    <reaction evidence="1">
        <text>RNA(n) + a ribonucleoside 5'-triphosphate = RNA(n+1) + diphosphate</text>
        <dbReference type="Rhea" id="RHEA:21248"/>
        <dbReference type="Rhea" id="RHEA-COMP:14527"/>
        <dbReference type="Rhea" id="RHEA-COMP:17342"/>
        <dbReference type="ChEBI" id="CHEBI:33019"/>
        <dbReference type="ChEBI" id="CHEBI:61557"/>
        <dbReference type="ChEBI" id="CHEBI:140395"/>
        <dbReference type="EC" id="2.7.7.6"/>
    </reaction>
</comment>
<comment type="subunit">
    <text evidence="1">The RNAP catalytic core consists of 2 alpha, 1 beta, 1 beta' and 1 omega subunit. When a sigma factor is associated with the core the holoenzyme is formed, which can initiate transcription.</text>
</comment>
<comment type="similarity">
    <text evidence="1">Belongs to the RNA polymerase beta chain family.</text>
</comment>
<proteinExistence type="inferred from homology"/>
<accession>A1WVC9</accession>
<keyword id="KW-0240">DNA-directed RNA polymerase</keyword>
<keyword id="KW-0548">Nucleotidyltransferase</keyword>
<keyword id="KW-1185">Reference proteome</keyword>
<keyword id="KW-0804">Transcription</keyword>
<keyword id="KW-0808">Transferase</keyword>
<name>RPOB_HALHL</name>
<dbReference type="EC" id="2.7.7.6" evidence="1"/>
<dbReference type="EMBL" id="CP000544">
    <property type="protein sequence ID" value="ABM61641.1"/>
    <property type="molecule type" value="Genomic_DNA"/>
</dbReference>
<dbReference type="RefSeq" id="WP_011813664.1">
    <property type="nucleotide sequence ID" value="NC_008789.1"/>
</dbReference>
<dbReference type="SMR" id="A1WVC9"/>
<dbReference type="STRING" id="349124.Hhal_0865"/>
<dbReference type="KEGG" id="hha:Hhal_0865"/>
<dbReference type="eggNOG" id="COG0085">
    <property type="taxonomic scope" value="Bacteria"/>
</dbReference>
<dbReference type="HOGENOM" id="CLU_000524_4_3_6"/>
<dbReference type="OrthoDB" id="9803954at2"/>
<dbReference type="Proteomes" id="UP000000647">
    <property type="component" value="Chromosome"/>
</dbReference>
<dbReference type="GO" id="GO:0000428">
    <property type="term" value="C:DNA-directed RNA polymerase complex"/>
    <property type="evidence" value="ECO:0007669"/>
    <property type="project" value="UniProtKB-KW"/>
</dbReference>
<dbReference type="GO" id="GO:0003677">
    <property type="term" value="F:DNA binding"/>
    <property type="evidence" value="ECO:0007669"/>
    <property type="project" value="UniProtKB-UniRule"/>
</dbReference>
<dbReference type="GO" id="GO:0003899">
    <property type="term" value="F:DNA-directed RNA polymerase activity"/>
    <property type="evidence" value="ECO:0007669"/>
    <property type="project" value="UniProtKB-UniRule"/>
</dbReference>
<dbReference type="GO" id="GO:0032549">
    <property type="term" value="F:ribonucleoside binding"/>
    <property type="evidence" value="ECO:0007669"/>
    <property type="project" value="InterPro"/>
</dbReference>
<dbReference type="GO" id="GO:0006351">
    <property type="term" value="P:DNA-templated transcription"/>
    <property type="evidence" value="ECO:0007669"/>
    <property type="project" value="UniProtKB-UniRule"/>
</dbReference>
<dbReference type="CDD" id="cd00653">
    <property type="entry name" value="RNA_pol_B_RPB2"/>
    <property type="match status" value="1"/>
</dbReference>
<dbReference type="FunFam" id="2.40.50.100:FF:000006">
    <property type="entry name" value="DNA-directed RNA polymerase subunit beta"/>
    <property type="match status" value="1"/>
</dbReference>
<dbReference type="FunFam" id="2.40.50.150:FF:000001">
    <property type="entry name" value="DNA-directed RNA polymerase subunit beta"/>
    <property type="match status" value="1"/>
</dbReference>
<dbReference type="FunFam" id="3.90.1800.10:FF:000001">
    <property type="entry name" value="DNA-directed RNA polymerase subunit beta"/>
    <property type="match status" value="1"/>
</dbReference>
<dbReference type="Gene3D" id="2.40.50.100">
    <property type="match status" value="1"/>
</dbReference>
<dbReference type="Gene3D" id="2.40.50.150">
    <property type="match status" value="1"/>
</dbReference>
<dbReference type="Gene3D" id="3.90.1100.10">
    <property type="match status" value="2"/>
</dbReference>
<dbReference type="Gene3D" id="6.10.140.1670">
    <property type="match status" value="1"/>
</dbReference>
<dbReference type="Gene3D" id="2.30.150.10">
    <property type="entry name" value="DNA-directed RNA polymerase, beta subunit, external 1 domain"/>
    <property type="match status" value="1"/>
</dbReference>
<dbReference type="Gene3D" id="2.40.270.10">
    <property type="entry name" value="DNA-directed RNA polymerase, subunit 2, domain 6"/>
    <property type="match status" value="1"/>
</dbReference>
<dbReference type="Gene3D" id="3.90.1800.10">
    <property type="entry name" value="RNA polymerase alpha subunit dimerisation domain"/>
    <property type="match status" value="1"/>
</dbReference>
<dbReference type="Gene3D" id="3.90.1110.10">
    <property type="entry name" value="RNA polymerase Rpb2, domain 2"/>
    <property type="match status" value="1"/>
</dbReference>
<dbReference type="HAMAP" id="MF_01321">
    <property type="entry name" value="RNApol_bact_RpoB"/>
    <property type="match status" value="1"/>
</dbReference>
<dbReference type="InterPro" id="IPR042107">
    <property type="entry name" value="DNA-dir_RNA_pol_bsu_ext_1_sf"/>
</dbReference>
<dbReference type="InterPro" id="IPR019462">
    <property type="entry name" value="DNA-dir_RNA_pol_bsu_external_1"/>
</dbReference>
<dbReference type="InterPro" id="IPR015712">
    <property type="entry name" value="DNA-dir_RNA_pol_su2"/>
</dbReference>
<dbReference type="InterPro" id="IPR007120">
    <property type="entry name" value="DNA-dir_RNAP_su2_dom"/>
</dbReference>
<dbReference type="InterPro" id="IPR037033">
    <property type="entry name" value="DNA-dir_RNAP_su2_hyb_sf"/>
</dbReference>
<dbReference type="InterPro" id="IPR010243">
    <property type="entry name" value="RNA_pol_bsu_bac"/>
</dbReference>
<dbReference type="InterPro" id="IPR007121">
    <property type="entry name" value="RNA_pol_bsu_CS"/>
</dbReference>
<dbReference type="InterPro" id="IPR007644">
    <property type="entry name" value="RNA_pol_bsu_protrusion"/>
</dbReference>
<dbReference type="InterPro" id="IPR007642">
    <property type="entry name" value="RNA_pol_Rpb2_2"/>
</dbReference>
<dbReference type="InterPro" id="IPR037034">
    <property type="entry name" value="RNA_pol_Rpb2_2_sf"/>
</dbReference>
<dbReference type="InterPro" id="IPR007645">
    <property type="entry name" value="RNA_pol_Rpb2_3"/>
</dbReference>
<dbReference type="InterPro" id="IPR007641">
    <property type="entry name" value="RNA_pol_Rpb2_7"/>
</dbReference>
<dbReference type="InterPro" id="IPR014724">
    <property type="entry name" value="RNA_pol_RPB2_OB-fold"/>
</dbReference>
<dbReference type="NCBIfam" id="NF001616">
    <property type="entry name" value="PRK00405.1"/>
    <property type="match status" value="1"/>
</dbReference>
<dbReference type="NCBIfam" id="TIGR02013">
    <property type="entry name" value="rpoB"/>
    <property type="match status" value="1"/>
</dbReference>
<dbReference type="PANTHER" id="PTHR20856">
    <property type="entry name" value="DNA-DIRECTED RNA POLYMERASE I SUBUNIT 2"/>
    <property type="match status" value="1"/>
</dbReference>
<dbReference type="Pfam" id="PF04563">
    <property type="entry name" value="RNA_pol_Rpb2_1"/>
    <property type="match status" value="1"/>
</dbReference>
<dbReference type="Pfam" id="PF04561">
    <property type="entry name" value="RNA_pol_Rpb2_2"/>
    <property type="match status" value="2"/>
</dbReference>
<dbReference type="Pfam" id="PF04565">
    <property type="entry name" value="RNA_pol_Rpb2_3"/>
    <property type="match status" value="1"/>
</dbReference>
<dbReference type="Pfam" id="PF10385">
    <property type="entry name" value="RNA_pol_Rpb2_45"/>
    <property type="match status" value="1"/>
</dbReference>
<dbReference type="Pfam" id="PF00562">
    <property type="entry name" value="RNA_pol_Rpb2_6"/>
    <property type="match status" value="1"/>
</dbReference>
<dbReference type="Pfam" id="PF04560">
    <property type="entry name" value="RNA_pol_Rpb2_7"/>
    <property type="match status" value="1"/>
</dbReference>
<dbReference type="SUPFAM" id="SSF64484">
    <property type="entry name" value="beta and beta-prime subunits of DNA dependent RNA-polymerase"/>
    <property type="match status" value="1"/>
</dbReference>
<dbReference type="PROSITE" id="PS01166">
    <property type="entry name" value="RNA_POL_BETA"/>
    <property type="match status" value="1"/>
</dbReference>
<evidence type="ECO:0000255" key="1">
    <source>
        <dbReference type="HAMAP-Rule" id="MF_01321"/>
    </source>
</evidence>
<reference key="1">
    <citation type="submission" date="2006-12" db="EMBL/GenBank/DDBJ databases">
        <title>Complete sequence of Halorhodospira halophila SL1.</title>
        <authorList>
            <consortium name="US DOE Joint Genome Institute"/>
            <person name="Copeland A."/>
            <person name="Lucas S."/>
            <person name="Lapidus A."/>
            <person name="Barry K."/>
            <person name="Detter J.C."/>
            <person name="Glavina del Rio T."/>
            <person name="Hammon N."/>
            <person name="Israni S."/>
            <person name="Dalin E."/>
            <person name="Tice H."/>
            <person name="Pitluck S."/>
            <person name="Saunders E."/>
            <person name="Brettin T."/>
            <person name="Bruce D."/>
            <person name="Han C."/>
            <person name="Tapia R."/>
            <person name="Schmutz J."/>
            <person name="Larimer F."/>
            <person name="Land M."/>
            <person name="Hauser L."/>
            <person name="Kyrpides N."/>
            <person name="Mikhailova N."/>
            <person name="Hoff W."/>
            <person name="Richardson P."/>
        </authorList>
    </citation>
    <scope>NUCLEOTIDE SEQUENCE [LARGE SCALE GENOMIC DNA]</scope>
    <source>
        <strain>DSM 244 / SL1</strain>
    </source>
</reference>